<protein>
    <recommendedName>
        <fullName>UPF0053 protein in cps region</fullName>
    </recommendedName>
    <alternativeName>
        <fullName>ORF19</fullName>
    </alternativeName>
</protein>
<evidence type="ECO:0000255" key="1"/>
<evidence type="ECO:0000255" key="2">
    <source>
        <dbReference type="PROSITE-ProRule" id="PRU00703"/>
    </source>
</evidence>
<evidence type="ECO:0000305" key="3"/>
<name>YC19_KLEPN</name>
<accession>Q48445</accession>
<organism>
    <name type="scientific">Klebsiella pneumoniae</name>
    <dbReference type="NCBI Taxonomy" id="573"/>
    <lineage>
        <taxon>Bacteria</taxon>
        <taxon>Pseudomonadati</taxon>
        <taxon>Pseudomonadota</taxon>
        <taxon>Gammaproteobacteria</taxon>
        <taxon>Enterobacterales</taxon>
        <taxon>Enterobacteriaceae</taxon>
        <taxon>Klebsiella/Raoultella group</taxon>
        <taxon>Klebsiella</taxon>
        <taxon>Klebsiella pneumoniae complex</taxon>
    </lineage>
</organism>
<sequence>MILCLSFLLMIGFSLIAEGFSFIIPKGYLYAAIGFSVMIEALNQLAQFNRRRFLSANMTLRQRTTEAVMNLLSGQKEKAELDADTASLVADQDQHPLFNPQERLMIERVLNLNQRSVSSIMTSRHDIERINLSAPEEEIRSLVEKNQHTRLVVTGGKDNEDLLGVVHVIDLLQQSLRQEPLDLQALVRQPLVFPEGLPLLSALEQFRQARTHFAFVVDEFGSVEGIVTLSDVMETIAGNLPNEVEEIDARHDIQHHQDGSWTVNGHMPLEDLVQYVPLPLDDKREYHTVAGLLMEYLQHVPQWGRPLRLTVIPCARCRST</sequence>
<feature type="chain" id="PRO_0000088385" description="UPF0053 protein in cps region">
    <location>
        <begin position="1"/>
        <end position="320" status="greater than"/>
    </location>
</feature>
<feature type="transmembrane region" description="Helical" evidence="1">
    <location>
        <begin position="4"/>
        <end position="24"/>
    </location>
</feature>
<feature type="domain" description="CBS 1" evidence="2">
    <location>
        <begin position="121"/>
        <end position="183"/>
    </location>
</feature>
<feature type="domain" description="CBS 2" evidence="2">
    <location>
        <begin position="186"/>
        <end position="244"/>
    </location>
</feature>
<feature type="non-terminal residue">
    <location>
        <position position="320"/>
    </location>
</feature>
<dbReference type="EMBL" id="D21242">
    <property type="protein sequence ID" value="BAA21009.1"/>
    <property type="molecule type" value="Genomic_DNA"/>
</dbReference>
<dbReference type="SMR" id="Q48445"/>
<dbReference type="GO" id="GO:0005886">
    <property type="term" value="C:plasma membrane"/>
    <property type="evidence" value="ECO:0007669"/>
    <property type="project" value="UniProtKB-SubCell"/>
</dbReference>
<dbReference type="GO" id="GO:0050660">
    <property type="term" value="F:flavin adenine dinucleotide binding"/>
    <property type="evidence" value="ECO:0007669"/>
    <property type="project" value="InterPro"/>
</dbReference>
<dbReference type="CDD" id="cd04590">
    <property type="entry name" value="CBS_pair_CorC_HlyC_assoc"/>
    <property type="match status" value="1"/>
</dbReference>
<dbReference type="FunFam" id="3.10.580.10:FF:000011">
    <property type="entry name" value="TerC family inner membrane protein"/>
    <property type="match status" value="1"/>
</dbReference>
<dbReference type="Gene3D" id="3.30.465.10">
    <property type="match status" value="1"/>
</dbReference>
<dbReference type="Gene3D" id="3.10.580.10">
    <property type="entry name" value="CBS-domain"/>
    <property type="match status" value="1"/>
</dbReference>
<dbReference type="InterPro" id="IPR000644">
    <property type="entry name" value="CBS_dom"/>
</dbReference>
<dbReference type="InterPro" id="IPR046342">
    <property type="entry name" value="CBS_dom_sf"/>
</dbReference>
<dbReference type="InterPro" id="IPR036318">
    <property type="entry name" value="FAD-bd_PCMH-like_sf"/>
</dbReference>
<dbReference type="InterPro" id="IPR016169">
    <property type="entry name" value="FAD-bd_PCMH_sub2"/>
</dbReference>
<dbReference type="InterPro" id="IPR044751">
    <property type="entry name" value="Ion_transp-like_CBS"/>
</dbReference>
<dbReference type="InterPro" id="IPR005170">
    <property type="entry name" value="Transptr-assoc_dom"/>
</dbReference>
<dbReference type="PANTHER" id="PTHR22777">
    <property type="entry name" value="HEMOLYSIN-RELATED"/>
    <property type="match status" value="1"/>
</dbReference>
<dbReference type="PANTHER" id="PTHR22777:SF30">
    <property type="entry name" value="UPF0053 PROTEIN YEGH"/>
    <property type="match status" value="1"/>
</dbReference>
<dbReference type="Pfam" id="PF00571">
    <property type="entry name" value="CBS"/>
    <property type="match status" value="2"/>
</dbReference>
<dbReference type="Pfam" id="PF03471">
    <property type="entry name" value="CorC_HlyC"/>
    <property type="match status" value="1"/>
</dbReference>
<dbReference type="SUPFAM" id="SSF54631">
    <property type="entry name" value="CBS-domain pair"/>
    <property type="match status" value="1"/>
</dbReference>
<dbReference type="SUPFAM" id="SSF56176">
    <property type="entry name" value="FAD-binding/transporter-associated domain-like"/>
    <property type="match status" value="1"/>
</dbReference>
<dbReference type="PROSITE" id="PS51371">
    <property type="entry name" value="CBS"/>
    <property type="match status" value="2"/>
</dbReference>
<reference key="1">
    <citation type="journal article" date="1995" name="J. Bacteriol.">
        <title>Genomic organization of the Klebsiella pneumoniae cps region responsible for serotype K2 capsular polysaccharide synthesis in the virulent strain Chedid.</title>
        <authorList>
            <person name="Arakawa Y."/>
            <person name="Wacharotayankun R."/>
            <person name="Nagatsuka T."/>
            <person name="Ito H."/>
            <person name="Kato N."/>
            <person name="Ohta M."/>
        </authorList>
    </citation>
    <scope>NUCLEOTIDE SEQUENCE [GENOMIC DNA]</scope>
    <source>
        <strain>Chedid</strain>
    </source>
</reference>
<comment type="subcellular location">
    <subcellularLocation>
        <location evidence="3">Cell membrane</location>
    </subcellularLocation>
</comment>
<comment type="similarity">
    <text evidence="3">Belongs to the UPF0053 family.</text>
</comment>
<proteinExistence type="inferred from homology"/>
<keyword id="KW-0129">CBS domain</keyword>
<keyword id="KW-1003">Cell membrane</keyword>
<keyword id="KW-0472">Membrane</keyword>
<keyword id="KW-0677">Repeat</keyword>
<keyword id="KW-0812">Transmembrane</keyword>
<keyword id="KW-1133">Transmembrane helix</keyword>